<gene>
    <name evidence="1" type="primary">rplI</name>
    <name type="ordered locus">NIS_0999</name>
</gene>
<feature type="chain" id="PRO_1000014820" description="Large ribosomal subunit protein bL9">
    <location>
        <begin position="1"/>
        <end position="147"/>
    </location>
</feature>
<proteinExistence type="inferred from homology"/>
<keyword id="KW-1185">Reference proteome</keyword>
<keyword id="KW-0687">Ribonucleoprotein</keyword>
<keyword id="KW-0689">Ribosomal protein</keyword>
<keyword id="KW-0694">RNA-binding</keyword>
<keyword id="KW-0699">rRNA-binding</keyword>
<comment type="function">
    <text evidence="1">Binds to the 23S rRNA.</text>
</comment>
<comment type="similarity">
    <text evidence="1">Belongs to the bacterial ribosomal protein bL9 family.</text>
</comment>
<organism>
    <name type="scientific">Nitratiruptor sp. (strain SB155-2)</name>
    <dbReference type="NCBI Taxonomy" id="387092"/>
    <lineage>
        <taxon>Bacteria</taxon>
        <taxon>Pseudomonadati</taxon>
        <taxon>Campylobacterota</taxon>
        <taxon>Epsilonproteobacteria</taxon>
        <taxon>Nautiliales</taxon>
        <taxon>Nitratiruptoraceae</taxon>
        <taxon>Nitratiruptor</taxon>
    </lineage>
</organism>
<sequence length="147" mass="16253">MKVLLIKDVKNLGKAGEVKEVKDGYGKNFLIARGFAKLATPDVIEAWKKEQAKKAQEEAAEIEKLKQLKEKIESTKLVIKHKAGANGALFGAITNKEVAEELKKQGIEIDKKHIDIHPPIKQAGEYEIDVKLGHGIHAKLNLVVEAE</sequence>
<protein>
    <recommendedName>
        <fullName evidence="1">Large ribosomal subunit protein bL9</fullName>
    </recommendedName>
    <alternativeName>
        <fullName evidence="2">50S ribosomal protein L9</fullName>
    </alternativeName>
</protein>
<evidence type="ECO:0000255" key="1">
    <source>
        <dbReference type="HAMAP-Rule" id="MF_00503"/>
    </source>
</evidence>
<evidence type="ECO:0000305" key="2"/>
<reference key="1">
    <citation type="journal article" date="2007" name="Proc. Natl. Acad. Sci. U.S.A.">
        <title>Deep-sea vent epsilon-proteobacterial genomes provide insights into emergence of pathogens.</title>
        <authorList>
            <person name="Nakagawa S."/>
            <person name="Takaki Y."/>
            <person name="Shimamura S."/>
            <person name="Reysenbach A.-L."/>
            <person name="Takai K."/>
            <person name="Horikoshi K."/>
        </authorList>
    </citation>
    <scope>NUCLEOTIDE SEQUENCE [LARGE SCALE GENOMIC DNA]</scope>
    <source>
        <strain>SB155-2</strain>
    </source>
</reference>
<name>RL9_NITSB</name>
<dbReference type="EMBL" id="AP009178">
    <property type="protein sequence ID" value="BAF70109.1"/>
    <property type="molecule type" value="Genomic_DNA"/>
</dbReference>
<dbReference type="RefSeq" id="WP_012082372.1">
    <property type="nucleotide sequence ID" value="NC_009662.1"/>
</dbReference>
<dbReference type="SMR" id="A6Q3Q0"/>
<dbReference type="FunCoup" id="A6Q3Q0">
    <property type="interactions" value="579"/>
</dbReference>
<dbReference type="STRING" id="387092.NIS_0999"/>
<dbReference type="KEGG" id="nis:NIS_0999"/>
<dbReference type="eggNOG" id="COG0359">
    <property type="taxonomic scope" value="Bacteria"/>
</dbReference>
<dbReference type="HOGENOM" id="CLU_078938_3_0_7"/>
<dbReference type="InParanoid" id="A6Q3Q0"/>
<dbReference type="OrthoDB" id="9788336at2"/>
<dbReference type="Proteomes" id="UP000001118">
    <property type="component" value="Chromosome"/>
</dbReference>
<dbReference type="GO" id="GO:1990904">
    <property type="term" value="C:ribonucleoprotein complex"/>
    <property type="evidence" value="ECO:0007669"/>
    <property type="project" value="UniProtKB-KW"/>
</dbReference>
<dbReference type="GO" id="GO:0005840">
    <property type="term" value="C:ribosome"/>
    <property type="evidence" value="ECO:0007669"/>
    <property type="project" value="UniProtKB-KW"/>
</dbReference>
<dbReference type="GO" id="GO:0019843">
    <property type="term" value="F:rRNA binding"/>
    <property type="evidence" value="ECO:0007669"/>
    <property type="project" value="UniProtKB-UniRule"/>
</dbReference>
<dbReference type="GO" id="GO:0003735">
    <property type="term" value="F:structural constituent of ribosome"/>
    <property type="evidence" value="ECO:0007669"/>
    <property type="project" value="InterPro"/>
</dbReference>
<dbReference type="GO" id="GO:0006412">
    <property type="term" value="P:translation"/>
    <property type="evidence" value="ECO:0007669"/>
    <property type="project" value="UniProtKB-UniRule"/>
</dbReference>
<dbReference type="FunFam" id="3.40.5.10:FF:000002">
    <property type="entry name" value="50S ribosomal protein L9"/>
    <property type="match status" value="1"/>
</dbReference>
<dbReference type="Gene3D" id="3.10.430.100">
    <property type="entry name" value="Ribosomal protein L9, C-terminal domain"/>
    <property type="match status" value="1"/>
</dbReference>
<dbReference type="Gene3D" id="3.40.5.10">
    <property type="entry name" value="Ribosomal protein L9, N-terminal domain"/>
    <property type="match status" value="1"/>
</dbReference>
<dbReference type="HAMAP" id="MF_00503">
    <property type="entry name" value="Ribosomal_bL9"/>
    <property type="match status" value="1"/>
</dbReference>
<dbReference type="InterPro" id="IPR000244">
    <property type="entry name" value="Ribosomal_bL9"/>
</dbReference>
<dbReference type="InterPro" id="IPR009027">
    <property type="entry name" value="Ribosomal_bL9/RNase_H1_N"/>
</dbReference>
<dbReference type="InterPro" id="IPR020594">
    <property type="entry name" value="Ribosomal_bL9_bac/chp"/>
</dbReference>
<dbReference type="InterPro" id="IPR020069">
    <property type="entry name" value="Ribosomal_bL9_C"/>
</dbReference>
<dbReference type="InterPro" id="IPR036791">
    <property type="entry name" value="Ribosomal_bL9_C_sf"/>
</dbReference>
<dbReference type="InterPro" id="IPR020070">
    <property type="entry name" value="Ribosomal_bL9_N"/>
</dbReference>
<dbReference type="InterPro" id="IPR036935">
    <property type="entry name" value="Ribosomal_bL9_N_sf"/>
</dbReference>
<dbReference type="NCBIfam" id="TIGR00158">
    <property type="entry name" value="L9"/>
    <property type="match status" value="1"/>
</dbReference>
<dbReference type="PANTHER" id="PTHR21368">
    <property type="entry name" value="50S RIBOSOMAL PROTEIN L9"/>
    <property type="match status" value="1"/>
</dbReference>
<dbReference type="Pfam" id="PF03948">
    <property type="entry name" value="Ribosomal_L9_C"/>
    <property type="match status" value="1"/>
</dbReference>
<dbReference type="Pfam" id="PF01281">
    <property type="entry name" value="Ribosomal_L9_N"/>
    <property type="match status" value="1"/>
</dbReference>
<dbReference type="SUPFAM" id="SSF55658">
    <property type="entry name" value="L9 N-domain-like"/>
    <property type="match status" value="1"/>
</dbReference>
<dbReference type="SUPFAM" id="SSF55653">
    <property type="entry name" value="Ribosomal protein L9 C-domain"/>
    <property type="match status" value="1"/>
</dbReference>
<dbReference type="PROSITE" id="PS00651">
    <property type="entry name" value="RIBOSOMAL_L9"/>
    <property type="match status" value="1"/>
</dbReference>
<accession>A6Q3Q0</accession>